<protein>
    <recommendedName>
        <fullName evidence="1">Octanoyltransferase</fullName>
        <ecNumber evidence="1">2.3.1.181</ecNumber>
    </recommendedName>
    <alternativeName>
        <fullName evidence="1">Lipoate-protein ligase B</fullName>
    </alternativeName>
    <alternativeName>
        <fullName evidence="1">Lipoyl/octanoyl transferase</fullName>
    </alternativeName>
    <alternativeName>
        <fullName evidence="1">Octanoyl-[acyl-carrier-protein]-protein N-octanoyltransferase</fullName>
    </alternativeName>
</protein>
<reference key="1">
    <citation type="journal article" date="2006" name="Appl. Environ. Microbiol.">
        <title>Genome sequence of the chemolithoautotrophic nitrite-oxidizing bacterium Nitrobacter winogradskyi Nb-255.</title>
        <authorList>
            <person name="Starkenburg S.R."/>
            <person name="Chain P.S.G."/>
            <person name="Sayavedra-Soto L.A."/>
            <person name="Hauser L."/>
            <person name="Land M.L."/>
            <person name="Larimer F.W."/>
            <person name="Malfatti S.A."/>
            <person name="Klotz M.G."/>
            <person name="Bottomley P.J."/>
            <person name="Arp D.J."/>
            <person name="Hickey W.J."/>
        </authorList>
    </citation>
    <scope>NUCLEOTIDE SEQUENCE [LARGE SCALE GENOMIC DNA]</scope>
    <source>
        <strain>ATCC 25391 / DSM 10237 / CIP 104748 / NCIMB 11846 / Nb-255</strain>
    </source>
</reference>
<dbReference type="EC" id="2.3.1.181" evidence="1"/>
<dbReference type="EMBL" id="CP000115">
    <property type="protein sequence ID" value="ABA04992.1"/>
    <property type="molecule type" value="Genomic_DNA"/>
</dbReference>
<dbReference type="RefSeq" id="WP_011314988.1">
    <property type="nucleotide sequence ID" value="NC_007406.1"/>
</dbReference>
<dbReference type="SMR" id="Q3SRU9"/>
<dbReference type="STRING" id="323098.Nwi_1731"/>
<dbReference type="KEGG" id="nwi:Nwi_1731"/>
<dbReference type="eggNOG" id="COG0321">
    <property type="taxonomic scope" value="Bacteria"/>
</dbReference>
<dbReference type="HOGENOM" id="CLU_035168_3_0_5"/>
<dbReference type="OrthoDB" id="9787061at2"/>
<dbReference type="UniPathway" id="UPA00538">
    <property type="reaction ID" value="UER00592"/>
</dbReference>
<dbReference type="Proteomes" id="UP000002531">
    <property type="component" value="Chromosome"/>
</dbReference>
<dbReference type="GO" id="GO:0005737">
    <property type="term" value="C:cytoplasm"/>
    <property type="evidence" value="ECO:0007669"/>
    <property type="project" value="UniProtKB-SubCell"/>
</dbReference>
<dbReference type="GO" id="GO:0033819">
    <property type="term" value="F:lipoyl(octanoyl) transferase activity"/>
    <property type="evidence" value="ECO:0007669"/>
    <property type="project" value="UniProtKB-EC"/>
</dbReference>
<dbReference type="GO" id="GO:0036211">
    <property type="term" value="P:protein modification process"/>
    <property type="evidence" value="ECO:0007669"/>
    <property type="project" value="InterPro"/>
</dbReference>
<dbReference type="CDD" id="cd16444">
    <property type="entry name" value="LipB"/>
    <property type="match status" value="1"/>
</dbReference>
<dbReference type="FunFam" id="3.30.930.10:FF:000159">
    <property type="entry name" value="Octanoyltransferase"/>
    <property type="match status" value="1"/>
</dbReference>
<dbReference type="Gene3D" id="3.30.930.10">
    <property type="entry name" value="Bira Bifunctional Protein, Domain 2"/>
    <property type="match status" value="1"/>
</dbReference>
<dbReference type="HAMAP" id="MF_00013">
    <property type="entry name" value="LipB"/>
    <property type="match status" value="1"/>
</dbReference>
<dbReference type="InterPro" id="IPR045864">
    <property type="entry name" value="aa-tRNA-synth_II/BPL/LPL"/>
</dbReference>
<dbReference type="InterPro" id="IPR004143">
    <property type="entry name" value="BPL_LPL_catalytic"/>
</dbReference>
<dbReference type="InterPro" id="IPR000544">
    <property type="entry name" value="Octanoyltransferase"/>
</dbReference>
<dbReference type="InterPro" id="IPR020605">
    <property type="entry name" value="Octanoyltransferase_CS"/>
</dbReference>
<dbReference type="NCBIfam" id="TIGR00214">
    <property type="entry name" value="lipB"/>
    <property type="match status" value="1"/>
</dbReference>
<dbReference type="NCBIfam" id="NF010921">
    <property type="entry name" value="PRK14341.1"/>
    <property type="match status" value="1"/>
</dbReference>
<dbReference type="NCBIfam" id="NF010925">
    <property type="entry name" value="PRK14345.1"/>
    <property type="match status" value="1"/>
</dbReference>
<dbReference type="PANTHER" id="PTHR10993:SF7">
    <property type="entry name" value="LIPOYLTRANSFERASE 2, MITOCHONDRIAL-RELATED"/>
    <property type="match status" value="1"/>
</dbReference>
<dbReference type="PANTHER" id="PTHR10993">
    <property type="entry name" value="OCTANOYLTRANSFERASE"/>
    <property type="match status" value="1"/>
</dbReference>
<dbReference type="Pfam" id="PF21948">
    <property type="entry name" value="LplA-B_cat"/>
    <property type="match status" value="1"/>
</dbReference>
<dbReference type="PIRSF" id="PIRSF016262">
    <property type="entry name" value="LPLase"/>
    <property type="match status" value="1"/>
</dbReference>
<dbReference type="SUPFAM" id="SSF55681">
    <property type="entry name" value="Class II aaRS and biotin synthetases"/>
    <property type="match status" value="1"/>
</dbReference>
<dbReference type="PROSITE" id="PS51733">
    <property type="entry name" value="BPL_LPL_CATALYTIC"/>
    <property type="match status" value="1"/>
</dbReference>
<dbReference type="PROSITE" id="PS01313">
    <property type="entry name" value="LIPB"/>
    <property type="match status" value="1"/>
</dbReference>
<sequence length="231" mass="25737">MINSRQTLDLKLFAASPGEPVDWRRSDQPVPYPGAVDAMERRAAAIASSEAAEQVWLLEHPPLYTCGTSGREADLVKARFPLFSTGRGGQITYHGPGQRIAYVMLDLKRRRPDVREFIACLEEWIIRTLDAFGVKGERREDRVGVWVARPDKGPGHEDKIAAIGVRLRRWVSFHGVSLNVDPDLSHFADIVPCGVSDPRYGVTSLADLGLRVRLTDIDQALKRTFSEVFGS</sequence>
<name>LIPB_NITWN</name>
<gene>
    <name evidence="1" type="primary">lipB</name>
    <name type="ordered locus">Nwi_1731</name>
</gene>
<organism>
    <name type="scientific">Nitrobacter winogradskyi (strain ATCC 25391 / DSM 10237 / CIP 104748 / NCIMB 11846 / Nb-255)</name>
    <dbReference type="NCBI Taxonomy" id="323098"/>
    <lineage>
        <taxon>Bacteria</taxon>
        <taxon>Pseudomonadati</taxon>
        <taxon>Pseudomonadota</taxon>
        <taxon>Alphaproteobacteria</taxon>
        <taxon>Hyphomicrobiales</taxon>
        <taxon>Nitrobacteraceae</taxon>
        <taxon>Nitrobacter</taxon>
    </lineage>
</organism>
<evidence type="ECO:0000255" key="1">
    <source>
        <dbReference type="HAMAP-Rule" id="MF_00013"/>
    </source>
</evidence>
<evidence type="ECO:0000255" key="2">
    <source>
        <dbReference type="PROSITE-ProRule" id="PRU01067"/>
    </source>
</evidence>
<proteinExistence type="inferred from homology"/>
<feature type="chain" id="PRO_0000242736" description="Octanoyltransferase">
    <location>
        <begin position="1"/>
        <end position="231"/>
    </location>
</feature>
<feature type="domain" description="BPL/LPL catalytic" evidence="2">
    <location>
        <begin position="49"/>
        <end position="231"/>
    </location>
</feature>
<feature type="active site" description="Acyl-thioester intermediate" evidence="1">
    <location>
        <position position="193"/>
    </location>
</feature>
<feature type="binding site" evidence="1">
    <location>
        <begin position="87"/>
        <end position="94"/>
    </location>
    <ligand>
        <name>substrate</name>
    </ligand>
</feature>
<feature type="binding site" evidence="1">
    <location>
        <begin position="162"/>
        <end position="164"/>
    </location>
    <ligand>
        <name>substrate</name>
    </ligand>
</feature>
<feature type="binding site" evidence="1">
    <location>
        <begin position="175"/>
        <end position="177"/>
    </location>
    <ligand>
        <name>substrate</name>
    </ligand>
</feature>
<feature type="site" description="Lowers pKa of active site Cys" evidence="1">
    <location>
        <position position="159"/>
    </location>
</feature>
<accession>Q3SRU9</accession>
<comment type="function">
    <text evidence="1">Catalyzes the transfer of endogenously produced octanoic acid from octanoyl-acyl-carrier-protein onto the lipoyl domains of lipoate-dependent enzymes. Lipoyl-ACP can also act as a substrate although octanoyl-ACP is likely to be the physiological substrate.</text>
</comment>
<comment type="catalytic activity">
    <reaction evidence="1">
        <text>octanoyl-[ACP] + L-lysyl-[protein] = N(6)-octanoyl-L-lysyl-[protein] + holo-[ACP] + H(+)</text>
        <dbReference type="Rhea" id="RHEA:17665"/>
        <dbReference type="Rhea" id="RHEA-COMP:9636"/>
        <dbReference type="Rhea" id="RHEA-COMP:9685"/>
        <dbReference type="Rhea" id="RHEA-COMP:9752"/>
        <dbReference type="Rhea" id="RHEA-COMP:9928"/>
        <dbReference type="ChEBI" id="CHEBI:15378"/>
        <dbReference type="ChEBI" id="CHEBI:29969"/>
        <dbReference type="ChEBI" id="CHEBI:64479"/>
        <dbReference type="ChEBI" id="CHEBI:78463"/>
        <dbReference type="ChEBI" id="CHEBI:78809"/>
        <dbReference type="EC" id="2.3.1.181"/>
    </reaction>
</comment>
<comment type="pathway">
    <text evidence="1">Protein modification; protein lipoylation via endogenous pathway; protein N(6)-(lipoyl)lysine from octanoyl-[acyl-carrier-protein]: step 1/2.</text>
</comment>
<comment type="subcellular location">
    <subcellularLocation>
        <location evidence="1">Cytoplasm</location>
    </subcellularLocation>
</comment>
<comment type="miscellaneous">
    <text evidence="1">In the reaction, the free carboxyl group of octanoic acid is attached via an amide linkage to the epsilon-amino group of a specific lysine residue of lipoyl domains of lipoate-dependent enzymes.</text>
</comment>
<comment type="similarity">
    <text evidence="1">Belongs to the LipB family.</text>
</comment>
<keyword id="KW-0012">Acyltransferase</keyword>
<keyword id="KW-0963">Cytoplasm</keyword>
<keyword id="KW-1185">Reference proteome</keyword>
<keyword id="KW-0808">Transferase</keyword>